<evidence type="ECO:0000250" key="1"/>
<evidence type="ECO:0000256" key="2">
    <source>
        <dbReference type="SAM" id="MobiDB-lite"/>
    </source>
</evidence>
<evidence type="ECO:0000305" key="3"/>
<accession>A2S1Q1</accession>
<accession>A2S1P9</accession>
<name>BIPC_BURM9</name>
<organism>
    <name type="scientific">Burkholderia mallei (strain NCTC 10229)</name>
    <dbReference type="NCBI Taxonomy" id="412022"/>
    <lineage>
        <taxon>Bacteria</taxon>
        <taxon>Pseudomonadati</taxon>
        <taxon>Pseudomonadota</taxon>
        <taxon>Betaproteobacteria</taxon>
        <taxon>Burkholderiales</taxon>
        <taxon>Burkholderiaceae</taxon>
        <taxon>Burkholderia</taxon>
        <taxon>pseudomallei group</taxon>
    </lineage>
</organism>
<keyword id="KW-0964">Secreted</keyword>
<keyword id="KW-0843">Virulence</keyword>
<dbReference type="EMBL" id="CP000545">
    <property type="protein sequence ID" value="ABM98823.2"/>
    <property type="status" value="ALT_INIT"/>
    <property type="molecule type" value="Genomic_DNA"/>
</dbReference>
<dbReference type="RefSeq" id="WP_004203135.1">
    <property type="nucleotide sequence ID" value="NC_008835.1"/>
</dbReference>
<dbReference type="GeneID" id="92975830"/>
<dbReference type="KEGG" id="bml:BMA10229_2072"/>
<dbReference type="HOGENOM" id="CLU_661703_0_0_4"/>
<dbReference type="Proteomes" id="UP000002283">
    <property type="component" value="Chromosome II"/>
</dbReference>
<dbReference type="GO" id="GO:0005576">
    <property type="term" value="C:extracellular region"/>
    <property type="evidence" value="ECO:0007669"/>
    <property type="project" value="UniProtKB-SubCell"/>
</dbReference>
<dbReference type="InterPro" id="IPR005427">
    <property type="entry name" value="BipC/SctB"/>
</dbReference>
<dbReference type="NCBIfam" id="TIGR02101">
    <property type="entry name" value="IpaC_SipC"/>
    <property type="match status" value="1"/>
</dbReference>
<dbReference type="Pfam" id="PF09599">
    <property type="entry name" value="IpaC_SipC"/>
    <property type="match status" value="1"/>
</dbReference>
<dbReference type="PRINTS" id="PR01608">
    <property type="entry name" value="BACINVASINC"/>
</dbReference>
<gene>
    <name type="primary">bipC</name>
    <name type="ordered locus">BMA10229_2072</name>
</gene>
<sequence length="419" mass="44323">MSIGVQSSGINISHAELSRLVDAGKSEQGDKAVRDDGRALARADAALAAVVGERVAARRDAVAGSGAQRVELARPKPDAQTRATDRRTVSGLEREHKRLAASQTPRVTGMHDALVQRHVSLDGAKAAHGEGVKRAAGDAPRAAADAPQRFAFADDKAFDAMLALGAAMQKNVQSDLAMQGKLTMLAHDAMMSAAAQDRSIGAAQMTAAIAGGALQATTSLGGAMQQMKSLSTKSMSIEKELKPQAELKQFHAEQALELRGINKPVLSNDEVSHVKIKRDTGETVRHEIDHGGERMSDEHASVLAQEAPARQHRIDMHGMRHEENLVKAGRQQMKGDLLQSGGQIGKNQIDGASAQQQGADRAEQKEDENAQQTAMAAASTRDEAAHRSREAAQKAIDAAKSQVANDNAVAAQVAGNLRT</sequence>
<protein>
    <recommendedName>
        <fullName>Effector protein BipC</fullName>
    </recommendedName>
</protein>
<feature type="chain" id="PRO_0000343996" description="Effector protein BipC">
    <location>
        <begin position="1"/>
        <end position="419"/>
    </location>
</feature>
<feature type="region of interest" description="Disordered" evidence="2">
    <location>
        <begin position="62"/>
        <end position="91"/>
    </location>
</feature>
<feature type="region of interest" description="Disordered" evidence="2">
    <location>
        <begin position="338"/>
        <end position="402"/>
    </location>
</feature>
<feature type="compositionally biased region" description="Basic and acidic residues" evidence="2">
    <location>
        <begin position="71"/>
        <end position="91"/>
    </location>
</feature>
<feature type="compositionally biased region" description="Basic and acidic residues" evidence="2">
    <location>
        <begin position="380"/>
        <end position="392"/>
    </location>
</feature>
<reference key="1">
    <citation type="journal article" date="2010" name="Genome Biol. Evol.">
        <title>Continuing evolution of Burkholderia mallei through genome reduction and large-scale rearrangements.</title>
        <authorList>
            <person name="Losada L."/>
            <person name="Ronning C.M."/>
            <person name="DeShazer D."/>
            <person name="Woods D."/>
            <person name="Fedorova N."/>
            <person name="Kim H.S."/>
            <person name="Shabalina S.A."/>
            <person name="Pearson T.R."/>
            <person name="Brinkac L."/>
            <person name="Tan P."/>
            <person name="Nandi T."/>
            <person name="Crabtree J."/>
            <person name="Badger J."/>
            <person name="Beckstrom-Sternberg S."/>
            <person name="Saqib M."/>
            <person name="Schutzer S.E."/>
            <person name="Keim P."/>
            <person name="Nierman W.C."/>
        </authorList>
    </citation>
    <scope>NUCLEOTIDE SEQUENCE [LARGE SCALE GENOMIC DNA]</scope>
    <source>
        <strain>NCTC 10229</strain>
    </source>
</reference>
<proteinExistence type="inferred from homology"/>
<comment type="subcellular location">
    <subcellularLocation>
        <location evidence="1">Secreted</location>
    </subcellularLocation>
    <text evidence="1">Secreted via the bsa type III secretion system.</text>
</comment>
<comment type="similarity">
    <text evidence="3">Belongs to the SctB/SipC family.</text>
</comment>
<comment type="sequence caution" evidence="3">
    <conflict type="erroneous initiation">
        <sequence resource="EMBL-CDS" id="ABM98823"/>
    </conflict>
    <text>Extended N-terminus.</text>
</comment>